<name>ASB11_HUMAN</name>
<organism>
    <name type="scientific">Homo sapiens</name>
    <name type="common">Human</name>
    <dbReference type="NCBI Taxonomy" id="9606"/>
    <lineage>
        <taxon>Eukaryota</taxon>
        <taxon>Metazoa</taxon>
        <taxon>Chordata</taxon>
        <taxon>Craniata</taxon>
        <taxon>Vertebrata</taxon>
        <taxon>Euteleostomi</taxon>
        <taxon>Mammalia</taxon>
        <taxon>Eutheria</taxon>
        <taxon>Euarchontoglires</taxon>
        <taxon>Primates</taxon>
        <taxon>Haplorrhini</taxon>
        <taxon>Catarrhini</taxon>
        <taxon>Hominidae</taxon>
        <taxon>Homo</taxon>
    </lineage>
</organism>
<gene>
    <name evidence="7 9" type="primary">ASB11</name>
</gene>
<dbReference type="EMBL" id="AF425642">
    <property type="protein sequence ID" value="AAL60519.1"/>
    <property type="molecule type" value="mRNA"/>
</dbReference>
<dbReference type="EMBL" id="BX537857">
    <property type="protein sequence ID" value="CAD97864.1"/>
    <property type="molecule type" value="mRNA"/>
</dbReference>
<dbReference type="EMBL" id="AC095351">
    <property type="status" value="NOT_ANNOTATED_CDS"/>
    <property type="molecule type" value="Genomic_DNA"/>
</dbReference>
<dbReference type="EMBL" id="BC069340">
    <property type="protein sequence ID" value="AAH69340.1"/>
    <property type="molecule type" value="mRNA"/>
</dbReference>
<dbReference type="EMBL" id="BC103874">
    <property type="protein sequence ID" value="AAI03875.1"/>
    <property type="molecule type" value="mRNA"/>
</dbReference>
<dbReference type="EMBL" id="BC103875">
    <property type="protein sequence ID" value="AAI03876.1"/>
    <property type="molecule type" value="mRNA"/>
</dbReference>
<dbReference type="CCDS" id="CCDS14164.1">
    <molecule id="Q8WXH4-1"/>
</dbReference>
<dbReference type="CCDS" id="CCDS35209.1">
    <molecule id="Q8WXH4-3"/>
</dbReference>
<dbReference type="CCDS" id="CCDS56596.1">
    <molecule id="Q8WXH4-2"/>
</dbReference>
<dbReference type="RefSeq" id="NP_001012428.1">
    <molecule id="Q8WXH4-3"/>
    <property type="nucleotide sequence ID" value="NM_001012428.2"/>
</dbReference>
<dbReference type="RefSeq" id="NP_001188512.1">
    <molecule id="Q8WXH4-2"/>
    <property type="nucleotide sequence ID" value="NM_001201583.2"/>
</dbReference>
<dbReference type="RefSeq" id="NP_543149.1">
    <molecule id="Q8WXH4-1"/>
    <property type="nucleotide sequence ID" value="NM_080873.3"/>
</dbReference>
<dbReference type="PDB" id="4UUC">
    <property type="method" value="X-ray"/>
    <property type="resolution" value="1.80 A"/>
    <property type="chains" value="A=64-287"/>
</dbReference>
<dbReference type="PDBsum" id="4UUC"/>
<dbReference type="SMR" id="Q8WXH4"/>
<dbReference type="BioGRID" id="126610">
    <property type="interactions" value="247"/>
</dbReference>
<dbReference type="FunCoup" id="Q8WXH4">
    <property type="interactions" value="7"/>
</dbReference>
<dbReference type="STRING" id="9606.ENSP00000417914"/>
<dbReference type="iPTMnet" id="Q8WXH4"/>
<dbReference type="PhosphoSitePlus" id="Q8WXH4"/>
<dbReference type="BioMuta" id="ASB11"/>
<dbReference type="DMDM" id="20531990"/>
<dbReference type="MassIVE" id="Q8WXH4"/>
<dbReference type="PaxDb" id="9606-ENSP00000417914"/>
<dbReference type="PeptideAtlas" id="Q8WXH4"/>
<dbReference type="ProteomicsDB" id="19927"/>
<dbReference type="ProteomicsDB" id="75055">
    <molecule id="Q8WXH4-1"/>
</dbReference>
<dbReference type="ProteomicsDB" id="75056">
    <molecule id="Q8WXH4-2"/>
</dbReference>
<dbReference type="Antibodypedia" id="353">
    <property type="antibodies" value="110 antibodies from 20 providers"/>
</dbReference>
<dbReference type="DNASU" id="140456"/>
<dbReference type="Ensembl" id="ENST00000344384.8">
    <molecule id="Q8WXH4-3"/>
    <property type="protein sequence ID" value="ENSP00000343408.4"/>
    <property type="gene ID" value="ENSG00000165192.14"/>
</dbReference>
<dbReference type="Ensembl" id="ENST00000380470.7">
    <molecule id="Q8WXH4-2"/>
    <property type="protein sequence ID" value="ENSP00000369837.3"/>
    <property type="gene ID" value="ENSG00000165192.14"/>
</dbReference>
<dbReference type="Ensembl" id="ENST00000480796.6">
    <molecule id="Q8WXH4-1"/>
    <property type="protein sequence ID" value="ENSP00000417914.1"/>
    <property type="gene ID" value="ENSG00000165192.14"/>
</dbReference>
<dbReference type="GeneID" id="140456"/>
<dbReference type="KEGG" id="hsa:140456"/>
<dbReference type="MANE-Select" id="ENST00000480796.6">
    <property type="protein sequence ID" value="ENSP00000417914.1"/>
    <property type="RefSeq nucleotide sequence ID" value="NM_080873.3"/>
    <property type="RefSeq protein sequence ID" value="NP_543149.1"/>
</dbReference>
<dbReference type="UCSC" id="uc004cwo.3">
    <molecule id="Q8WXH4-1"/>
    <property type="organism name" value="human"/>
</dbReference>
<dbReference type="AGR" id="HGNC:17186"/>
<dbReference type="CTD" id="140456"/>
<dbReference type="DisGeNET" id="140456"/>
<dbReference type="GeneCards" id="ASB11"/>
<dbReference type="HGNC" id="HGNC:17186">
    <property type="gene designation" value="ASB11"/>
</dbReference>
<dbReference type="HPA" id="ENSG00000165192">
    <property type="expression patterns" value="Group enriched (heart muscle, skeletal muscle, tongue)"/>
</dbReference>
<dbReference type="MIM" id="300626">
    <property type="type" value="gene"/>
</dbReference>
<dbReference type="neXtProt" id="NX_Q8WXH4"/>
<dbReference type="OpenTargets" id="ENSG00000165192"/>
<dbReference type="PharmGKB" id="PA25029"/>
<dbReference type="VEuPathDB" id="HostDB:ENSG00000165192"/>
<dbReference type="eggNOG" id="KOG0504">
    <property type="taxonomic scope" value="Eukaryota"/>
</dbReference>
<dbReference type="GeneTree" id="ENSGT00940000160592"/>
<dbReference type="HOGENOM" id="CLU_000134_4_1_1"/>
<dbReference type="InParanoid" id="Q8WXH4"/>
<dbReference type="OMA" id="GRACHQV"/>
<dbReference type="OrthoDB" id="3246549at2759"/>
<dbReference type="PAN-GO" id="Q8WXH4">
    <property type="GO annotations" value="2 GO annotations based on evolutionary models"/>
</dbReference>
<dbReference type="PhylomeDB" id="Q8WXH4"/>
<dbReference type="TreeFam" id="TF331945"/>
<dbReference type="PathwayCommons" id="Q8WXH4"/>
<dbReference type="Reactome" id="R-HSA-8951664">
    <property type="pathway name" value="Neddylation"/>
</dbReference>
<dbReference type="Reactome" id="R-HSA-983168">
    <property type="pathway name" value="Antigen processing: Ubiquitination &amp; Proteasome degradation"/>
</dbReference>
<dbReference type="SIGNOR" id="Q8WXH4"/>
<dbReference type="UniPathway" id="UPA00143"/>
<dbReference type="BioGRID-ORCS" id="140456">
    <property type="hits" value="8 hits in 806 CRISPR screens"/>
</dbReference>
<dbReference type="EvolutionaryTrace" id="Q8WXH4"/>
<dbReference type="GenomeRNAi" id="140456"/>
<dbReference type="Pharos" id="Q8WXH4">
    <property type="development level" value="Tdark"/>
</dbReference>
<dbReference type="PRO" id="PR:Q8WXH4"/>
<dbReference type="Proteomes" id="UP000005640">
    <property type="component" value="Chromosome X"/>
</dbReference>
<dbReference type="RNAct" id="Q8WXH4">
    <property type="molecule type" value="protein"/>
</dbReference>
<dbReference type="Bgee" id="ENSG00000165192">
    <property type="expression patterns" value="Expressed in hindlimb stylopod muscle and 43 other cell types or tissues"/>
</dbReference>
<dbReference type="ExpressionAtlas" id="Q8WXH4">
    <property type="expression patterns" value="baseline and differential"/>
</dbReference>
<dbReference type="GO" id="GO:0031466">
    <property type="term" value="C:Cul5-RING ubiquitin ligase complex"/>
    <property type="evidence" value="ECO:0000314"/>
    <property type="project" value="UniProtKB"/>
</dbReference>
<dbReference type="GO" id="GO:0005829">
    <property type="term" value="C:cytosol"/>
    <property type="evidence" value="ECO:0000304"/>
    <property type="project" value="Reactome"/>
</dbReference>
<dbReference type="GO" id="GO:0005783">
    <property type="term" value="C:endoplasmic reticulum"/>
    <property type="evidence" value="ECO:0000314"/>
    <property type="project" value="UniProtKB"/>
</dbReference>
<dbReference type="GO" id="GO:1990756">
    <property type="term" value="F:ubiquitin-like ligase-substrate adaptor activity"/>
    <property type="evidence" value="ECO:0000314"/>
    <property type="project" value="UniProtKB"/>
</dbReference>
<dbReference type="GO" id="GO:0030968">
    <property type="term" value="P:endoplasmic reticulum unfolded protein response"/>
    <property type="evidence" value="ECO:0000314"/>
    <property type="project" value="UniProtKB"/>
</dbReference>
<dbReference type="GO" id="GO:0045732">
    <property type="term" value="P:positive regulation of protein catabolic process"/>
    <property type="evidence" value="ECO:0000318"/>
    <property type="project" value="GO_Central"/>
</dbReference>
<dbReference type="GO" id="GO:0043161">
    <property type="term" value="P:proteasome-mediated ubiquitin-dependent protein catabolic process"/>
    <property type="evidence" value="ECO:0000314"/>
    <property type="project" value="UniProtKB"/>
</dbReference>
<dbReference type="GO" id="GO:0070979">
    <property type="term" value="P:protein K11-linked ubiquitination"/>
    <property type="evidence" value="ECO:0000314"/>
    <property type="project" value="UniProtKB"/>
</dbReference>
<dbReference type="GO" id="GO:0016567">
    <property type="term" value="P:protein ubiquitination"/>
    <property type="evidence" value="ECO:0000314"/>
    <property type="project" value="UniProtKB"/>
</dbReference>
<dbReference type="CDD" id="cd03728">
    <property type="entry name" value="SOCS_ASB_9_11"/>
    <property type="match status" value="1"/>
</dbReference>
<dbReference type="FunFam" id="1.10.750.20:FF:000001">
    <property type="entry name" value="Ankyrin repeat and SOCS box containing 1"/>
    <property type="match status" value="1"/>
</dbReference>
<dbReference type="FunFam" id="1.25.40.20:FF:000016">
    <property type="entry name" value="Ankyrin repeat and SOCS box containing 5"/>
    <property type="match status" value="1"/>
</dbReference>
<dbReference type="Gene3D" id="1.25.40.20">
    <property type="entry name" value="Ankyrin repeat-containing domain"/>
    <property type="match status" value="1"/>
</dbReference>
<dbReference type="Gene3D" id="1.10.750.20">
    <property type="entry name" value="SOCS box"/>
    <property type="match status" value="1"/>
</dbReference>
<dbReference type="InterPro" id="IPR051573">
    <property type="entry name" value="Ankyrin-SOCS_box_domain"/>
</dbReference>
<dbReference type="InterPro" id="IPR002110">
    <property type="entry name" value="Ankyrin_rpt"/>
</dbReference>
<dbReference type="InterPro" id="IPR036770">
    <property type="entry name" value="Ankyrin_rpt-contain_sf"/>
</dbReference>
<dbReference type="InterPro" id="IPR037333">
    <property type="entry name" value="ASB9/11_SOCS"/>
</dbReference>
<dbReference type="InterPro" id="IPR001496">
    <property type="entry name" value="SOCS_box"/>
</dbReference>
<dbReference type="InterPro" id="IPR036036">
    <property type="entry name" value="SOCS_box-like_dom_sf"/>
</dbReference>
<dbReference type="PANTHER" id="PTHR24136:SF14">
    <property type="entry name" value="ANKYRIN REPEAT AND SOCS BOX PROTEIN 11"/>
    <property type="match status" value="1"/>
</dbReference>
<dbReference type="PANTHER" id="PTHR24136">
    <property type="entry name" value="SOWAH (DROSOPHILA) HOMOLOG"/>
    <property type="match status" value="1"/>
</dbReference>
<dbReference type="Pfam" id="PF12796">
    <property type="entry name" value="Ank_2"/>
    <property type="match status" value="3"/>
</dbReference>
<dbReference type="Pfam" id="PF07525">
    <property type="entry name" value="SOCS_box"/>
    <property type="match status" value="1"/>
</dbReference>
<dbReference type="SMART" id="SM00248">
    <property type="entry name" value="ANK"/>
    <property type="match status" value="6"/>
</dbReference>
<dbReference type="SMART" id="SM00969">
    <property type="entry name" value="SOCS_box"/>
    <property type="match status" value="1"/>
</dbReference>
<dbReference type="SUPFAM" id="SSF48403">
    <property type="entry name" value="Ankyrin repeat"/>
    <property type="match status" value="1"/>
</dbReference>
<dbReference type="SUPFAM" id="SSF158235">
    <property type="entry name" value="SOCS box-like"/>
    <property type="match status" value="1"/>
</dbReference>
<dbReference type="PROSITE" id="PS50297">
    <property type="entry name" value="ANK_REP_REGION"/>
    <property type="match status" value="1"/>
</dbReference>
<dbReference type="PROSITE" id="PS50088">
    <property type="entry name" value="ANK_REPEAT"/>
    <property type="match status" value="6"/>
</dbReference>
<dbReference type="PROSITE" id="PS50225">
    <property type="entry name" value="SOCS"/>
    <property type="match status" value="1"/>
</dbReference>
<feature type="chain" id="PRO_0000066944" description="Ankyrin repeat and SOCS box protein 11">
    <location>
        <begin position="1"/>
        <end position="323"/>
    </location>
</feature>
<feature type="repeat" description="ANK 1">
    <location>
        <begin position="64"/>
        <end position="93"/>
    </location>
</feature>
<feature type="repeat" description="ANK 2">
    <location>
        <begin position="97"/>
        <end position="126"/>
    </location>
</feature>
<feature type="repeat" description="ANK 3">
    <location>
        <begin position="130"/>
        <end position="159"/>
    </location>
</feature>
<feature type="repeat" description="ANK 4">
    <location>
        <begin position="162"/>
        <end position="191"/>
    </location>
</feature>
<feature type="repeat" description="ANK 5">
    <location>
        <begin position="195"/>
        <end position="224"/>
    </location>
</feature>
<feature type="repeat" description="ANK 6">
    <location>
        <begin position="227"/>
        <end position="256"/>
    </location>
</feature>
<feature type="domain" description="SOCS box" evidence="1">
    <location>
        <begin position="273"/>
        <end position="323"/>
    </location>
</feature>
<feature type="splice variant" id="VSP_047127" description="In isoform 3." evidence="8">
    <original>MEDGPVFYGFKNIFITMFATFFFFKLLIKVFLALLTHFYIVKGNRKEAARIAEEIYGGIS</original>
    <variation>MLQLTGENEKNCEVSERIRRSGPWKEISFGDYICHTFQG</variation>
    <location>
        <begin position="1"/>
        <end position="60"/>
    </location>
</feature>
<feature type="splice variant" id="VSP_043087" description="In isoform 2." evidence="6">
    <location>
        <begin position="88"/>
        <end position="104"/>
    </location>
</feature>
<feature type="sequence variant" id="VAR_069428" description="In dbSNP:rs144572145." evidence="2">
    <original>S</original>
    <variation>L</variation>
    <location>
        <position position="165"/>
    </location>
</feature>
<feature type="sequence variant" id="VAR_048286" description="In dbSNP:rs34025595.">
    <original>D</original>
    <variation>N</variation>
    <location>
        <position position="249"/>
    </location>
</feature>
<feature type="sequence variant" id="VAR_048287" description="In dbSNP:rs35859007.">
    <original>S</original>
    <variation>G</variation>
    <location>
        <position position="263"/>
    </location>
</feature>
<feature type="helix" evidence="11">
    <location>
        <begin position="68"/>
        <end position="75"/>
    </location>
</feature>
<feature type="helix" evidence="11">
    <location>
        <begin position="78"/>
        <end position="87"/>
    </location>
</feature>
<feature type="helix" evidence="11">
    <location>
        <begin position="101"/>
        <end position="107"/>
    </location>
</feature>
<feature type="helix" evidence="11">
    <location>
        <begin position="111"/>
        <end position="119"/>
    </location>
</feature>
<feature type="helix" evidence="11">
    <location>
        <begin position="134"/>
        <end position="141"/>
    </location>
</feature>
<feature type="helix" evidence="11">
    <location>
        <begin position="144"/>
        <end position="152"/>
    </location>
</feature>
<feature type="helix" evidence="11">
    <location>
        <begin position="166"/>
        <end position="172"/>
    </location>
</feature>
<feature type="helix" evidence="11">
    <location>
        <begin position="176"/>
        <end position="184"/>
    </location>
</feature>
<feature type="turn" evidence="11">
    <location>
        <begin position="194"/>
        <end position="196"/>
    </location>
</feature>
<feature type="helix" evidence="11">
    <location>
        <begin position="199"/>
        <end position="205"/>
    </location>
</feature>
<feature type="helix" evidence="11">
    <location>
        <begin position="209"/>
        <end position="217"/>
    </location>
</feature>
<feature type="helix" evidence="11">
    <location>
        <begin position="231"/>
        <end position="236"/>
    </location>
</feature>
<feature type="helix" evidence="11">
    <location>
        <begin position="241"/>
        <end position="249"/>
    </location>
</feature>
<feature type="helix" evidence="11">
    <location>
        <begin position="264"/>
        <end position="267"/>
    </location>
</feature>
<feature type="helix" evidence="11">
    <location>
        <begin position="273"/>
        <end position="281"/>
    </location>
</feature>
<accession>Q8WXH4</accession>
<accession>E9PEN1</accession>
<accession>Q3SYC4</accession>
<accession>Q7Z667</accession>
<reference key="1">
    <citation type="submission" date="2001-09" db="EMBL/GenBank/DDBJ databases">
        <title>SOCS box proteins.</title>
        <authorList>
            <person name="Kile B.T."/>
            <person name="Hilton D.J."/>
            <person name="Nicola N.A."/>
        </authorList>
    </citation>
    <scope>NUCLEOTIDE SEQUENCE [MRNA] (ISOFORM 1)</scope>
</reference>
<reference key="2">
    <citation type="journal article" date="2007" name="BMC Genomics">
        <title>The full-ORF clone resource of the German cDNA consortium.</title>
        <authorList>
            <person name="Bechtel S."/>
            <person name="Rosenfelder H."/>
            <person name="Duda A."/>
            <person name="Schmidt C.P."/>
            <person name="Ernst U."/>
            <person name="Wellenreuther R."/>
            <person name="Mehrle A."/>
            <person name="Schuster C."/>
            <person name="Bahr A."/>
            <person name="Bloecker H."/>
            <person name="Heubner D."/>
            <person name="Hoerlein A."/>
            <person name="Michel G."/>
            <person name="Wedler H."/>
            <person name="Koehrer K."/>
            <person name="Ottenwaelder B."/>
            <person name="Poustka A."/>
            <person name="Wiemann S."/>
            <person name="Schupp I."/>
        </authorList>
    </citation>
    <scope>NUCLEOTIDE SEQUENCE [LARGE SCALE MRNA] (ISOFORM 2)</scope>
    <source>
        <tissue>Liver</tissue>
    </source>
</reference>
<reference key="3">
    <citation type="journal article" date="2005" name="Nature">
        <title>The DNA sequence of the human X chromosome.</title>
        <authorList>
            <person name="Ross M.T."/>
            <person name="Grafham D.V."/>
            <person name="Coffey A.J."/>
            <person name="Scherer S."/>
            <person name="McLay K."/>
            <person name="Muzny D."/>
            <person name="Platzer M."/>
            <person name="Howell G.R."/>
            <person name="Burrows C."/>
            <person name="Bird C.P."/>
            <person name="Frankish A."/>
            <person name="Lovell F.L."/>
            <person name="Howe K.L."/>
            <person name="Ashurst J.L."/>
            <person name="Fulton R.S."/>
            <person name="Sudbrak R."/>
            <person name="Wen G."/>
            <person name="Jones M.C."/>
            <person name="Hurles M.E."/>
            <person name="Andrews T.D."/>
            <person name="Scott C.E."/>
            <person name="Searle S."/>
            <person name="Ramser J."/>
            <person name="Whittaker A."/>
            <person name="Deadman R."/>
            <person name="Carter N.P."/>
            <person name="Hunt S.E."/>
            <person name="Chen R."/>
            <person name="Cree A."/>
            <person name="Gunaratne P."/>
            <person name="Havlak P."/>
            <person name="Hodgson A."/>
            <person name="Metzker M.L."/>
            <person name="Richards S."/>
            <person name="Scott G."/>
            <person name="Steffen D."/>
            <person name="Sodergren E."/>
            <person name="Wheeler D.A."/>
            <person name="Worley K.C."/>
            <person name="Ainscough R."/>
            <person name="Ambrose K.D."/>
            <person name="Ansari-Lari M.A."/>
            <person name="Aradhya S."/>
            <person name="Ashwell R.I."/>
            <person name="Babbage A.K."/>
            <person name="Bagguley C.L."/>
            <person name="Ballabio A."/>
            <person name="Banerjee R."/>
            <person name="Barker G.E."/>
            <person name="Barlow K.F."/>
            <person name="Barrett I.P."/>
            <person name="Bates K.N."/>
            <person name="Beare D.M."/>
            <person name="Beasley H."/>
            <person name="Beasley O."/>
            <person name="Beck A."/>
            <person name="Bethel G."/>
            <person name="Blechschmidt K."/>
            <person name="Brady N."/>
            <person name="Bray-Allen S."/>
            <person name="Bridgeman A.M."/>
            <person name="Brown A.J."/>
            <person name="Brown M.J."/>
            <person name="Bonnin D."/>
            <person name="Bruford E.A."/>
            <person name="Buhay C."/>
            <person name="Burch P."/>
            <person name="Burford D."/>
            <person name="Burgess J."/>
            <person name="Burrill W."/>
            <person name="Burton J."/>
            <person name="Bye J.M."/>
            <person name="Carder C."/>
            <person name="Carrel L."/>
            <person name="Chako J."/>
            <person name="Chapman J.C."/>
            <person name="Chavez D."/>
            <person name="Chen E."/>
            <person name="Chen G."/>
            <person name="Chen Y."/>
            <person name="Chen Z."/>
            <person name="Chinault C."/>
            <person name="Ciccodicola A."/>
            <person name="Clark S.Y."/>
            <person name="Clarke G."/>
            <person name="Clee C.M."/>
            <person name="Clegg S."/>
            <person name="Clerc-Blankenburg K."/>
            <person name="Clifford K."/>
            <person name="Cobley V."/>
            <person name="Cole C.G."/>
            <person name="Conquer J.S."/>
            <person name="Corby N."/>
            <person name="Connor R.E."/>
            <person name="David R."/>
            <person name="Davies J."/>
            <person name="Davis C."/>
            <person name="Davis J."/>
            <person name="Delgado O."/>
            <person name="Deshazo D."/>
            <person name="Dhami P."/>
            <person name="Ding Y."/>
            <person name="Dinh H."/>
            <person name="Dodsworth S."/>
            <person name="Draper H."/>
            <person name="Dugan-Rocha S."/>
            <person name="Dunham A."/>
            <person name="Dunn M."/>
            <person name="Durbin K.J."/>
            <person name="Dutta I."/>
            <person name="Eades T."/>
            <person name="Ellwood M."/>
            <person name="Emery-Cohen A."/>
            <person name="Errington H."/>
            <person name="Evans K.L."/>
            <person name="Faulkner L."/>
            <person name="Francis F."/>
            <person name="Frankland J."/>
            <person name="Fraser A.E."/>
            <person name="Galgoczy P."/>
            <person name="Gilbert J."/>
            <person name="Gill R."/>
            <person name="Gloeckner G."/>
            <person name="Gregory S.G."/>
            <person name="Gribble S."/>
            <person name="Griffiths C."/>
            <person name="Grocock R."/>
            <person name="Gu Y."/>
            <person name="Gwilliam R."/>
            <person name="Hamilton C."/>
            <person name="Hart E.A."/>
            <person name="Hawes A."/>
            <person name="Heath P.D."/>
            <person name="Heitmann K."/>
            <person name="Hennig S."/>
            <person name="Hernandez J."/>
            <person name="Hinzmann B."/>
            <person name="Ho S."/>
            <person name="Hoffs M."/>
            <person name="Howden P.J."/>
            <person name="Huckle E.J."/>
            <person name="Hume J."/>
            <person name="Hunt P.J."/>
            <person name="Hunt A.R."/>
            <person name="Isherwood J."/>
            <person name="Jacob L."/>
            <person name="Johnson D."/>
            <person name="Jones S."/>
            <person name="de Jong P.J."/>
            <person name="Joseph S.S."/>
            <person name="Keenan S."/>
            <person name="Kelly S."/>
            <person name="Kershaw J.K."/>
            <person name="Khan Z."/>
            <person name="Kioschis P."/>
            <person name="Klages S."/>
            <person name="Knights A.J."/>
            <person name="Kosiura A."/>
            <person name="Kovar-Smith C."/>
            <person name="Laird G.K."/>
            <person name="Langford C."/>
            <person name="Lawlor S."/>
            <person name="Leversha M."/>
            <person name="Lewis L."/>
            <person name="Liu W."/>
            <person name="Lloyd C."/>
            <person name="Lloyd D.M."/>
            <person name="Loulseged H."/>
            <person name="Loveland J.E."/>
            <person name="Lovell J.D."/>
            <person name="Lozado R."/>
            <person name="Lu J."/>
            <person name="Lyne R."/>
            <person name="Ma J."/>
            <person name="Maheshwari M."/>
            <person name="Matthews L.H."/>
            <person name="McDowall J."/>
            <person name="McLaren S."/>
            <person name="McMurray A."/>
            <person name="Meidl P."/>
            <person name="Meitinger T."/>
            <person name="Milne S."/>
            <person name="Miner G."/>
            <person name="Mistry S.L."/>
            <person name="Morgan M."/>
            <person name="Morris S."/>
            <person name="Mueller I."/>
            <person name="Mullikin J.C."/>
            <person name="Nguyen N."/>
            <person name="Nordsiek G."/>
            <person name="Nyakatura G."/>
            <person name="O'dell C.N."/>
            <person name="Okwuonu G."/>
            <person name="Palmer S."/>
            <person name="Pandian R."/>
            <person name="Parker D."/>
            <person name="Parrish J."/>
            <person name="Pasternak S."/>
            <person name="Patel D."/>
            <person name="Pearce A.V."/>
            <person name="Pearson D.M."/>
            <person name="Pelan S.E."/>
            <person name="Perez L."/>
            <person name="Porter K.M."/>
            <person name="Ramsey Y."/>
            <person name="Reichwald K."/>
            <person name="Rhodes S."/>
            <person name="Ridler K.A."/>
            <person name="Schlessinger D."/>
            <person name="Schueler M.G."/>
            <person name="Sehra H.K."/>
            <person name="Shaw-Smith C."/>
            <person name="Shen H."/>
            <person name="Sheridan E.M."/>
            <person name="Shownkeen R."/>
            <person name="Skuce C.D."/>
            <person name="Smith M.L."/>
            <person name="Sotheran E.C."/>
            <person name="Steingruber H.E."/>
            <person name="Steward C.A."/>
            <person name="Storey R."/>
            <person name="Swann R.M."/>
            <person name="Swarbreck D."/>
            <person name="Tabor P.E."/>
            <person name="Taudien S."/>
            <person name="Taylor T."/>
            <person name="Teague B."/>
            <person name="Thomas K."/>
            <person name="Thorpe A."/>
            <person name="Timms K."/>
            <person name="Tracey A."/>
            <person name="Trevanion S."/>
            <person name="Tromans A.C."/>
            <person name="d'Urso M."/>
            <person name="Verduzco D."/>
            <person name="Villasana D."/>
            <person name="Waldron L."/>
            <person name="Wall M."/>
            <person name="Wang Q."/>
            <person name="Warren J."/>
            <person name="Warry G.L."/>
            <person name="Wei X."/>
            <person name="West A."/>
            <person name="Whitehead S.L."/>
            <person name="Whiteley M.N."/>
            <person name="Wilkinson J.E."/>
            <person name="Willey D.L."/>
            <person name="Williams G."/>
            <person name="Williams L."/>
            <person name="Williamson A."/>
            <person name="Williamson H."/>
            <person name="Wilming L."/>
            <person name="Woodmansey R.L."/>
            <person name="Wray P.W."/>
            <person name="Yen J."/>
            <person name="Zhang J."/>
            <person name="Zhou J."/>
            <person name="Zoghbi H."/>
            <person name="Zorilla S."/>
            <person name="Buck D."/>
            <person name="Reinhardt R."/>
            <person name="Poustka A."/>
            <person name="Rosenthal A."/>
            <person name="Lehrach H."/>
            <person name="Meindl A."/>
            <person name="Minx P.J."/>
            <person name="Hillier L.W."/>
            <person name="Willard H.F."/>
            <person name="Wilson R.K."/>
            <person name="Waterston R.H."/>
            <person name="Rice C.M."/>
            <person name="Vaudin M."/>
            <person name="Coulson A."/>
            <person name="Nelson D.L."/>
            <person name="Weinstock G."/>
            <person name="Sulston J.E."/>
            <person name="Durbin R.M."/>
            <person name="Hubbard T."/>
            <person name="Gibbs R.A."/>
            <person name="Beck S."/>
            <person name="Rogers J."/>
            <person name="Bentley D.R."/>
        </authorList>
    </citation>
    <scope>NUCLEOTIDE SEQUENCE [LARGE SCALE GENOMIC DNA]</scope>
</reference>
<reference key="4">
    <citation type="journal article" date="2004" name="Genome Res.">
        <title>The status, quality, and expansion of the NIH full-length cDNA project: the Mammalian Gene Collection (MGC).</title>
        <authorList>
            <consortium name="The MGC Project Team"/>
        </authorList>
    </citation>
    <scope>NUCLEOTIDE SEQUENCE [LARGE SCALE MRNA] (ISOFORM 1)</scope>
</reference>
<reference key="5">
    <citation type="journal article" date="2014" name="J. Biol. Chem.">
        <title>Protein interaction screening for the ankyrin repeats and suppressor of cytokine signaling (SOCS) box (ASB) family identify Asb11 as a novel endoplasmic reticulum resident ubiquitin ligase.</title>
        <authorList>
            <person name="Andresen C.A."/>
            <person name="Smedegaard S."/>
            <person name="Sylvestersen K.B."/>
            <person name="Svensson C."/>
            <person name="Iglesias-Gato D."/>
            <person name="Cazzamali G."/>
            <person name="Nielsen T.K."/>
            <person name="Nielsen M.L."/>
            <person name="Flores-Morales A."/>
        </authorList>
    </citation>
    <scope>FUNCTION</scope>
    <scope>PATHWAY</scope>
    <scope>IDENTIFICATION IN THE ECS(ASB11) COMPLEX</scope>
    <scope>SUBCELLULAR LOCATION</scope>
</reference>
<reference key="6">
    <citation type="journal article" date="2019" name="J. Cell Biol.">
        <title>BIK ubiquitination by the E3 ligase Cul5-ASB11 determines cell fate during cellular stress.</title>
        <authorList>
            <person name="Chen F.Y."/>
            <person name="Huang M.Y."/>
            <person name="Lin Y.M."/>
            <person name="Ho C.H."/>
            <person name="Lin S.Y."/>
            <person name="Chen H.Y."/>
            <person name="Hung M.C."/>
            <person name="Chen R.H."/>
        </authorList>
    </citation>
    <scope>FUNCTION</scope>
    <scope>PATHWAY</scope>
    <scope>IDENTIFICATION IN THE ECS(ASB11) COMPLEX</scope>
    <scope>INDUCTION</scope>
</reference>
<reference key="7">
    <citation type="journal article" date="2024" name="Dev. Cell">
        <title>The UBE2F-CRL5ASB11-DIRAS2 axis is an oncogene and tumor suppressor cascade in pancreatic cancer cells.</title>
        <authorList>
            <person name="Chang Y."/>
            <person name="Chen Q."/>
            <person name="Li H."/>
            <person name="Xu J."/>
            <person name="Tan M."/>
            <person name="Xiong X."/>
            <person name="Sun Y."/>
        </authorList>
    </citation>
    <scope>FUNCTION</scope>
    <scope>PATHWAY</scope>
    <scope>IDENTIFICATION IN THE ECS(ASB11) COMPLEX</scope>
</reference>
<reference evidence="10" key="8">
    <citation type="submission" date="2014-07" db="PDB data bank">
        <title>Crystal structure of human Asb11 ankyrin repeat domain.</title>
        <authorList>
            <person name="Pinkas D.M."/>
            <person name="Sanvitale C."/>
            <person name="Kragh Nielsen T."/>
            <person name="Guo K."/>
            <person name="Sorrell F."/>
            <person name="Berridge G."/>
            <person name="Ayinampudi V."/>
            <person name="Wang D."/>
            <person name="Newman J.A."/>
            <person name="Tallant C."/>
            <person name="Chaikuad A."/>
            <person name="Canning P."/>
            <person name="Kopec J."/>
            <person name="Krojer T."/>
            <person name="Vollmar M."/>
            <person name="Allerston C.K."/>
            <person name="Chalk R."/>
            <person name="Burgess-Brown N."/>
            <person name="von Delft F."/>
            <person name="Arrowsmith C.H."/>
            <person name="Edwards A."/>
            <person name="Bountra C."/>
            <person name="Bullock A."/>
        </authorList>
    </citation>
    <scope>X-RAY CRYSTALLOGRAPHY (1.80 ANGSTROMS) OF 64-287</scope>
</reference>
<reference key="9">
    <citation type="journal article" date="2012" name="N. Engl. J. Med.">
        <title>Diagnostic exome sequencing in persons with severe intellectual disability.</title>
        <authorList>
            <person name="de Ligt J."/>
            <person name="Willemsen M.H."/>
            <person name="van Bon B.W."/>
            <person name="Kleefstra T."/>
            <person name="Yntema H.G."/>
            <person name="Kroes T."/>
            <person name="Vulto-van Silfhout A.T."/>
            <person name="Koolen D.A."/>
            <person name="de Vries P."/>
            <person name="Gilissen C."/>
            <person name="del Rosario M."/>
            <person name="Hoischen A."/>
            <person name="Scheffer H."/>
            <person name="de Vries B.B."/>
            <person name="Brunner H.G."/>
            <person name="Veltman J.A."/>
            <person name="Vissers L.E."/>
        </authorList>
    </citation>
    <scope>VARIANT LEU-165</scope>
</reference>
<proteinExistence type="evidence at protein level"/>
<comment type="function">
    <text evidence="3 4 5">Substrate-recognition component of a cullin-5-RING E3 ubiquitin-protein ligase complex (ECS complex, also named CRL5 complex), which mediates the ubiquitination and subsequent proteasomal degradation of target proteins, such as BIK, DIRAS2 and RPN1 (PubMed:24337577, PubMed:31387940, PubMed:38574733). The ECS(ASB11) complex acts as a regulator of the endoplasmic reticulum unfolded protein response by mediating ubiquitination and degradation of BIK (PubMed:31387940).</text>
</comment>
<comment type="pathway">
    <text evidence="3 4 5">Protein modification; protein ubiquitination.</text>
</comment>
<comment type="subunit">
    <text evidence="3 4 5">Substrate-recognition component of the ECS(ASB11) complex, composed of ASB11, CUL5, ELOB, ELOC and RNF7/RBX2.</text>
</comment>
<comment type="subcellular location">
    <subcellularLocation>
        <location evidence="3">Endoplasmic reticulum</location>
    </subcellularLocation>
</comment>
<comment type="alternative products">
    <event type="alternative splicing"/>
    <isoform>
        <id>Q8WXH4-1</id>
        <name>1</name>
        <sequence type="displayed"/>
    </isoform>
    <isoform>
        <id>Q8WXH4-2</id>
        <name>2</name>
        <sequence type="described" ref="VSP_043087"/>
    </isoform>
    <isoform>
        <id>Q8WXH4-3</id>
        <name>3</name>
        <sequence type="described" ref="VSP_047127"/>
    </isoform>
</comment>
<comment type="induction">
    <text evidence="4">Expression is induced by XBP1 in response to endoplasmic reticulum stress.</text>
</comment>
<comment type="similarity">
    <text evidence="8">Belongs to the ankyrin SOCS box (ASB) family.</text>
</comment>
<protein>
    <recommendedName>
        <fullName evidence="8">Ankyrin repeat and SOCS box protein 11</fullName>
        <shortName>ASB-11</shortName>
    </recommendedName>
</protein>
<evidence type="ECO:0000255" key="1">
    <source>
        <dbReference type="PROSITE-ProRule" id="PRU00194"/>
    </source>
</evidence>
<evidence type="ECO:0000269" key="2">
    <source>
    </source>
</evidence>
<evidence type="ECO:0000269" key="3">
    <source>
    </source>
</evidence>
<evidence type="ECO:0000269" key="4">
    <source>
    </source>
</evidence>
<evidence type="ECO:0000269" key="5">
    <source>
    </source>
</evidence>
<evidence type="ECO:0000303" key="6">
    <source>
    </source>
</evidence>
<evidence type="ECO:0000303" key="7">
    <source>
    </source>
</evidence>
<evidence type="ECO:0000305" key="8"/>
<evidence type="ECO:0000312" key="9">
    <source>
        <dbReference type="HGNC" id="HGNC:17186"/>
    </source>
</evidence>
<evidence type="ECO:0007744" key="10">
    <source>
        <dbReference type="PDB" id="4UUC"/>
    </source>
</evidence>
<evidence type="ECO:0007829" key="11">
    <source>
        <dbReference type="PDB" id="4UUC"/>
    </source>
</evidence>
<keyword id="KW-0002">3D-structure</keyword>
<keyword id="KW-0025">Alternative splicing</keyword>
<keyword id="KW-0040">ANK repeat</keyword>
<keyword id="KW-0256">Endoplasmic reticulum</keyword>
<keyword id="KW-1267">Proteomics identification</keyword>
<keyword id="KW-1185">Reference proteome</keyword>
<keyword id="KW-0677">Repeat</keyword>
<keyword id="KW-0833">Ubl conjugation pathway</keyword>
<sequence>MEDGPVFYGFKNIFITMFATFFFFKLLIKVFLALLTHFYIVKGNRKEAARIAEEIYGGISDCWADRSPLHEAAAQGRLLALKTLIAQGVNVNLVTINRVSSLHEACLGGHVACAKALLENGAHVNGVTVHGATPLFNACCSGSAACVNVLLEFGAKAQLEVHLASPIHEAVKRGHRECMEILLANNVNIDHEVPQLGTPLYVACTYQRVDCVKKLLELGASVDHGQWLDTPLHAAARQSNVEVIHLLTDYGANLKRRNAQGKSALDLAAPKSSVEQALLLREGPPALSQLCRLCVRKCLGRACHQAIHKLHLPEPLERFLLYQ</sequence>